<name>NSUN3_HUMAN</name>
<protein>
    <recommendedName>
        <fullName>tRNA (cytosine(34)-C(5))-methyltransferase, mitochondrial</fullName>
        <ecNumber evidence="3 4 5">2.1.1.-</ecNumber>
    </recommendedName>
    <alternativeName>
        <fullName evidence="11">NOL1/NOP2/Sun domain family member 3</fullName>
    </alternativeName>
</protein>
<keyword id="KW-0225">Disease variant</keyword>
<keyword id="KW-0489">Methyltransferase</keyword>
<keyword id="KW-0496">Mitochondrion</keyword>
<keyword id="KW-1274">Primary mitochondrial disease</keyword>
<keyword id="KW-1267">Proteomics identification</keyword>
<keyword id="KW-1185">Reference proteome</keyword>
<keyword id="KW-0694">RNA-binding</keyword>
<keyword id="KW-0949">S-adenosyl-L-methionine</keyword>
<keyword id="KW-0808">Transferase</keyword>
<keyword id="KW-0820">tRNA-binding</keyword>
<feature type="chain" id="PRO_0000289230" description="tRNA (cytosine(34)-C(5))-methyltransferase, mitochondrial">
    <location>
        <begin position="1"/>
        <end position="340"/>
    </location>
</feature>
<feature type="active site" description="Nucleophile" evidence="1 10">
    <location>
        <position position="265"/>
    </location>
</feature>
<feature type="binding site" evidence="1">
    <location>
        <begin position="139"/>
        <end position="145"/>
    </location>
    <ligand>
        <name>S-adenosyl-L-methionine</name>
        <dbReference type="ChEBI" id="CHEBI:59789"/>
    </ligand>
</feature>
<feature type="binding site" evidence="1">
    <location>
        <position position="162"/>
    </location>
    <ligand>
        <name>S-adenosyl-L-methionine</name>
        <dbReference type="ChEBI" id="CHEBI:59789"/>
    </ligand>
</feature>
<feature type="binding site" evidence="1">
    <location>
        <position position="193"/>
    </location>
    <ligand>
        <name>S-adenosyl-L-methionine</name>
        <dbReference type="ChEBI" id="CHEBI:59789"/>
    </ligand>
</feature>
<feature type="binding site" evidence="1">
    <location>
        <position position="211"/>
    </location>
    <ligand>
        <name>S-adenosyl-L-methionine</name>
        <dbReference type="ChEBI" id="CHEBI:59789"/>
    </ligand>
</feature>
<feature type="sequence variant" id="VAR_077445" description="In COXPD48." evidence="4">
    <location>
        <begin position="99"/>
        <end position="340"/>
    </location>
</feature>
<feature type="sequence variant" id="VAR_085049" description="In COXPD48; uncertain significance; dbSNP:rs2077283982." evidence="6">
    <original>A</original>
    <variation>P</variation>
    <location>
        <position position="141"/>
    </location>
</feature>
<feature type="sequence variant" id="VAR_085050" description="In COXPD48; uncertain significance; dbSNP:rs2077284206." evidence="6">
    <original>C</original>
    <variation>S</variation>
    <location>
        <position position="152"/>
    </location>
</feature>
<feature type="sequence variant" id="VAR_032605" description="In dbSNP:rs17854922." evidence="2">
    <original>A</original>
    <variation>V</variation>
    <location>
        <position position="295"/>
    </location>
</feature>
<feature type="mutagenesis site" description="In C2A; catalytic mutant. Abolishes ability to methylate mt-tRNA(Met)." evidence="4">
    <original>C</original>
    <variation>A</variation>
    <location>
        <position position="214"/>
    </location>
</feature>
<feature type="mutagenesis site" description="Catalytic mutant. Abolishes ability to methylate mt-tRNA(Met)." evidence="5">
    <original>C</original>
    <variation>A</variation>
    <location>
        <position position="265"/>
    </location>
</feature>
<organism>
    <name type="scientific">Homo sapiens</name>
    <name type="common">Human</name>
    <dbReference type="NCBI Taxonomy" id="9606"/>
    <lineage>
        <taxon>Eukaryota</taxon>
        <taxon>Metazoa</taxon>
        <taxon>Chordata</taxon>
        <taxon>Craniata</taxon>
        <taxon>Vertebrata</taxon>
        <taxon>Euteleostomi</taxon>
        <taxon>Mammalia</taxon>
        <taxon>Eutheria</taxon>
        <taxon>Euarchontoglires</taxon>
        <taxon>Primates</taxon>
        <taxon>Haplorrhini</taxon>
        <taxon>Catarrhini</taxon>
        <taxon>Hominidae</taxon>
        <taxon>Homo</taxon>
    </lineage>
</organism>
<reference key="1">
    <citation type="journal article" date="2004" name="Nat. Genet.">
        <title>Complete sequencing and characterization of 21,243 full-length human cDNAs.</title>
        <authorList>
            <person name="Ota T."/>
            <person name="Suzuki Y."/>
            <person name="Nishikawa T."/>
            <person name="Otsuki T."/>
            <person name="Sugiyama T."/>
            <person name="Irie R."/>
            <person name="Wakamatsu A."/>
            <person name="Hayashi K."/>
            <person name="Sato H."/>
            <person name="Nagai K."/>
            <person name="Kimura K."/>
            <person name="Makita H."/>
            <person name="Sekine M."/>
            <person name="Obayashi M."/>
            <person name="Nishi T."/>
            <person name="Shibahara T."/>
            <person name="Tanaka T."/>
            <person name="Ishii S."/>
            <person name="Yamamoto J."/>
            <person name="Saito K."/>
            <person name="Kawai Y."/>
            <person name="Isono Y."/>
            <person name="Nakamura Y."/>
            <person name="Nagahari K."/>
            <person name="Murakami K."/>
            <person name="Yasuda T."/>
            <person name="Iwayanagi T."/>
            <person name="Wagatsuma M."/>
            <person name="Shiratori A."/>
            <person name="Sudo H."/>
            <person name="Hosoiri T."/>
            <person name="Kaku Y."/>
            <person name="Kodaira H."/>
            <person name="Kondo H."/>
            <person name="Sugawara M."/>
            <person name="Takahashi M."/>
            <person name="Kanda K."/>
            <person name="Yokoi T."/>
            <person name="Furuya T."/>
            <person name="Kikkawa E."/>
            <person name="Omura Y."/>
            <person name="Abe K."/>
            <person name="Kamihara K."/>
            <person name="Katsuta N."/>
            <person name="Sato K."/>
            <person name="Tanikawa M."/>
            <person name="Yamazaki M."/>
            <person name="Ninomiya K."/>
            <person name="Ishibashi T."/>
            <person name="Yamashita H."/>
            <person name="Murakawa K."/>
            <person name="Fujimori K."/>
            <person name="Tanai H."/>
            <person name="Kimata M."/>
            <person name="Watanabe M."/>
            <person name="Hiraoka S."/>
            <person name="Chiba Y."/>
            <person name="Ishida S."/>
            <person name="Ono Y."/>
            <person name="Takiguchi S."/>
            <person name="Watanabe S."/>
            <person name="Yosida M."/>
            <person name="Hotuta T."/>
            <person name="Kusano J."/>
            <person name="Kanehori K."/>
            <person name="Takahashi-Fujii A."/>
            <person name="Hara H."/>
            <person name="Tanase T.-O."/>
            <person name="Nomura Y."/>
            <person name="Togiya S."/>
            <person name="Komai F."/>
            <person name="Hara R."/>
            <person name="Takeuchi K."/>
            <person name="Arita M."/>
            <person name="Imose N."/>
            <person name="Musashino K."/>
            <person name="Yuuki H."/>
            <person name="Oshima A."/>
            <person name="Sasaki N."/>
            <person name="Aotsuka S."/>
            <person name="Yoshikawa Y."/>
            <person name="Matsunawa H."/>
            <person name="Ichihara T."/>
            <person name="Shiohata N."/>
            <person name="Sano S."/>
            <person name="Moriya S."/>
            <person name="Momiyama H."/>
            <person name="Satoh N."/>
            <person name="Takami S."/>
            <person name="Terashima Y."/>
            <person name="Suzuki O."/>
            <person name="Nakagawa S."/>
            <person name="Senoh A."/>
            <person name="Mizoguchi H."/>
            <person name="Goto Y."/>
            <person name="Shimizu F."/>
            <person name="Wakebe H."/>
            <person name="Hishigaki H."/>
            <person name="Watanabe T."/>
            <person name="Sugiyama A."/>
            <person name="Takemoto M."/>
            <person name="Kawakami B."/>
            <person name="Yamazaki M."/>
            <person name="Watanabe K."/>
            <person name="Kumagai A."/>
            <person name="Itakura S."/>
            <person name="Fukuzumi Y."/>
            <person name="Fujimori Y."/>
            <person name="Komiyama M."/>
            <person name="Tashiro H."/>
            <person name="Tanigami A."/>
            <person name="Fujiwara T."/>
            <person name="Ono T."/>
            <person name="Yamada K."/>
            <person name="Fujii Y."/>
            <person name="Ozaki K."/>
            <person name="Hirao M."/>
            <person name="Ohmori Y."/>
            <person name="Kawabata A."/>
            <person name="Hikiji T."/>
            <person name="Kobatake N."/>
            <person name="Inagaki H."/>
            <person name="Ikema Y."/>
            <person name="Okamoto S."/>
            <person name="Okitani R."/>
            <person name="Kawakami T."/>
            <person name="Noguchi S."/>
            <person name="Itoh T."/>
            <person name="Shigeta K."/>
            <person name="Senba T."/>
            <person name="Matsumura K."/>
            <person name="Nakajima Y."/>
            <person name="Mizuno T."/>
            <person name="Morinaga M."/>
            <person name="Sasaki M."/>
            <person name="Togashi T."/>
            <person name="Oyama M."/>
            <person name="Hata H."/>
            <person name="Watanabe M."/>
            <person name="Komatsu T."/>
            <person name="Mizushima-Sugano J."/>
            <person name="Satoh T."/>
            <person name="Shirai Y."/>
            <person name="Takahashi Y."/>
            <person name="Nakagawa K."/>
            <person name="Okumura K."/>
            <person name="Nagase T."/>
            <person name="Nomura N."/>
            <person name="Kikuchi H."/>
            <person name="Masuho Y."/>
            <person name="Yamashita R."/>
            <person name="Nakai K."/>
            <person name="Yada T."/>
            <person name="Nakamura Y."/>
            <person name="Ohara O."/>
            <person name="Isogai T."/>
            <person name="Sugano S."/>
        </authorList>
    </citation>
    <scope>NUCLEOTIDE SEQUENCE [LARGE SCALE MRNA]</scope>
    <source>
        <tissue>Small intestine</tissue>
    </source>
</reference>
<reference key="2">
    <citation type="submission" date="1999-07" db="EMBL/GenBank/DDBJ databases">
        <authorList>
            <person name="Hui R.T."/>
            <person name="Sheng H."/>
            <person name="Qin B.M."/>
            <person name="Liu Y.Q."/>
            <person name="Zhao B."/>
            <person name="Liu B."/>
            <person name="Wang X.Y."/>
            <person name="Zhang Q."/>
            <person name="Song L."/>
            <person name="Ji X.J."/>
            <person name="Liu B.H."/>
            <person name="Lu H."/>
            <person name="Xu H.S."/>
            <person name="Zheng W.Y."/>
            <person name="Teng C.Y."/>
            <person name="Gong Q."/>
            <person name="Gao R.L."/>
        </authorList>
    </citation>
    <scope>NUCLEOTIDE SEQUENCE [LARGE SCALE MRNA]</scope>
    <source>
        <tissue>Aorta</tissue>
    </source>
</reference>
<reference key="3">
    <citation type="journal article" date="2004" name="Genome Res.">
        <title>The status, quality, and expansion of the NIH full-length cDNA project: the Mammalian Gene Collection (MGC).</title>
        <authorList>
            <consortium name="The MGC Project Team"/>
        </authorList>
    </citation>
    <scope>NUCLEOTIDE SEQUENCE [LARGE SCALE MRNA]</scope>
    <scope>VARIANT VAL-295</scope>
    <source>
        <tissue>Prostate</tissue>
    </source>
</reference>
<reference key="4">
    <citation type="submission" date="2001-02" db="EMBL/GenBank/DDBJ databases">
        <title>Isolation of full-length cDNA clones from human fetal brain cDNA library.</title>
        <authorList>
            <person name="Mao Y."/>
            <person name="Xie Y."/>
        </authorList>
    </citation>
    <scope>NUCLEOTIDE SEQUENCE [LARGE SCALE MRNA] OF 1-156</scope>
    <source>
        <tissue>Fetal brain</tissue>
    </source>
</reference>
<reference key="5">
    <citation type="journal article" date="2016" name="EMBO J.">
        <title>NSUN3 and ABH1 modify the wobble position of mt-tRNAMet to expand codon recognition in mitochondrial translation.</title>
        <authorList>
            <person name="Haag S."/>
            <person name="Sloan K.E."/>
            <person name="Ranjan N."/>
            <person name="Warda A.S."/>
            <person name="Kretschmer J."/>
            <person name="Blessing C."/>
            <person name="Huebner B."/>
            <person name="Seikowski J."/>
            <person name="Dennerlein S."/>
            <person name="Rehling P."/>
            <person name="Rodnina M.V."/>
            <person name="Hoebartner C."/>
            <person name="Bohnsack M.T."/>
        </authorList>
    </citation>
    <scope>FUNCTION</scope>
    <scope>CATALYTIC ACTIVITY</scope>
    <scope>SUBCELLULAR LOCATION</scope>
    <scope>ACTIVE SITE</scope>
    <scope>MUTAGENESIS OF CYS-265</scope>
</reference>
<reference key="6">
    <citation type="journal article" date="2016" name="Nat. Chem. Biol.">
        <title>NSUN3 methylase initiates 5-formylcytidine biogenesis in human mitochondrial tRNA(Met).</title>
        <authorList>
            <person name="Nakano S."/>
            <person name="Suzuki T."/>
            <person name="Kawarada L."/>
            <person name="Iwata H."/>
            <person name="Asano K."/>
            <person name="Suzuki T."/>
        </authorList>
    </citation>
    <scope>FUNCTION</scope>
    <scope>CATALYTIC ACTIVITY</scope>
    <scope>SUBCELLULAR LOCATION</scope>
</reference>
<reference key="7">
    <citation type="journal article" date="2016" name="Nat. Commun.">
        <title>Deficient methylation and formylation of mt-tRNA(Met) wobble cytosine in a patient carrying mutations in NSUN3.</title>
        <authorList>
            <person name="Van Haute L."/>
            <person name="Dietmann S."/>
            <person name="Kremer L."/>
            <person name="Hussain S."/>
            <person name="Pearce S.F."/>
            <person name="Powell C.A."/>
            <person name="Rorbach J."/>
            <person name="Lantaff R."/>
            <person name="Blanco S."/>
            <person name="Sauer S."/>
            <person name="Kotzaeridou U."/>
            <person name="Hoffmann G.F."/>
            <person name="Memari Y."/>
            <person name="Kolb-Kokocinski A."/>
            <person name="Durbin R."/>
            <person name="Mayr J.A."/>
            <person name="Frye M."/>
            <person name="Prokisch H."/>
            <person name="Minczuk M."/>
        </authorList>
    </citation>
    <scope>FUNCTION</scope>
    <scope>CATALYTIC ACTIVITY</scope>
    <scope>SUBCELLULAR LOCATION</scope>
    <scope>INVOLVEMENT IN COXPD48</scope>
    <scope>VARIANT COXPD48 99-ARG--TRP-340 DEL</scope>
    <scope>MUTAGENESIS OF CYS-214</scope>
</reference>
<reference key="8">
    <citation type="journal article" date="2020" name="J. Mol. Neurosci.">
        <title>Novel Biallelic NSUN3 Variants Cause Early-Onset Mitochondrial Encephalomyopathy and Seizures.</title>
        <authorList>
            <person name="Paramasivam A."/>
            <person name="Meena A.K."/>
            <person name="Venkatapathi C."/>
            <person name="Pitceathly R.D.S."/>
            <person name="Thangaraj K."/>
        </authorList>
    </citation>
    <scope>INVOLVEMENT IN COXPD48</scope>
    <scope>VARIANTS COXPD48 PRO-141 AND SER-152</scope>
</reference>
<sequence length="340" mass="38244">MLTQLKAKSEGKLAKQICKVVLDHFEKQYSKELGDAWNTVREILTSPSCWQYAVLLNRFNYPFELEKDLHLKGYHTLSQGSLPNYPKSVKCYLSRTPGRIPSERHQIGNLKKYYLLNAASLLPVLALELRDGEKVLDLCAAPGGKSIALLQCACPGYLHCNEYDSLRLRWLRQTLESFIPQPLINVIKVSELDGRKMGDAQPEMFDKVLVDAPCSNDRSWLFSSDSQKASCRISQRRNLPLLQIELLRSAIKALRPGGILVYSTCTLSKAENQDVISEILNSHGNIMPMDIKGIARTCSHDFTFAPTGQECGLLVIPDKGKAWGPMYVAKLKKSWSTGKW</sequence>
<evidence type="ECO:0000255" key="1">
    <source>
        <dbReference type="PROSITE-ProRule" id="PRU01023"/>
    </source>
</evidence>
<evidence type="ECO:0000269" key="2">
    <source>
    </source>
</evidence>
<evidence type="ECO:0000269" key="3">
    <source>
    </source>
</evidence>
<evidence type="ECO:0000269" key="4">
    <source>
    </source>
</evidence>
<evidence type="ECO:0000269" key="5">
    <source>
    </source>
</evidence>
<evidence type="ECO:0000269" key="6">
    <source>
    </source>
</evidence>
<evidence type="ECO:0000303" key="7">
    <source ref="2"/>
</evidence>
<evidence type="ECO:0000303" key="8">
    <source ref="4"/>
</evidence>
<evidence type="ECO:0000305" key="9"/>
<evidence type="ECO:0000305" key="10">
    <source>
    </source>
</evidence>
<evidence type="ECO:0000312" key="11">
    <source>
        <dbReference type="HGNC" id="HGNC:26208"/>
    </source>
</evidence>
<comment type="function">
    <text evidence="3 4 5">Mitochondrial tRNA methyltransferase that mediates methylation of cytosine to 5-methylcytosine (m5C) at position 34 of mt-tRNA(Met) (PubMed:27214402, PubMed:27356879, PubMed:27497299). mt-tRNA(Met) methylation at cytosine(34) takes place at the wobble position of the anticodon and initiates the formation of 5-formylcytosine (f(5)c) at this position (PubMed:27214402, PubMed:27356879, PubMed:27497299). mt-tRNA(Met) containing the f(5)c modification at the wobble position enables recognition of the AUA codon in addition to the AUG codon, expanding codon recognition in mitochondrial translation (PubMed:27356879, PubMed:27497299).</text>
</comment>
<comment type="catalytic activity">
    <reaction evidence="3 4 5">
        <text>cytidine(34) in mitochondrial tRNA + S-adenosyl-L-methionine = 5-methylcytidine(34) in mitochondrial tRNA + S-adenosyl-L-homocysteine + H(+)</text>
        <dbReference type="Rhea" id="RHEA:53076"/>
        <dbReference type="Rhea" id="RHEA-COMP:13451"/>
        <dbReference type="Rhea" id="RHEA-COMP:13453"/>
        <dbReference type="ChEBI" id="CHEBI:15378"/>
        <dbReference type="ChEBI" id="CHEBI:57856"/>
        <dbReference type="ChEBI" id="CHEBI:59789"/>
        <dbReference type="ChEBI" id="CHEBI:74483"/>
        <dbReference type="ChEBI" id="CHEBI:82748"/>
    </reaction>
    <physiologicalReaction direction="left-to-right" evidence="10">
        <dbReference type="Rhea" id="RHEA:53077"/>
    </physiologicalReaction>
</comment>
<comment type="subcellular location">
    <subcellularLocation>
        <location evidence="3 4 5">Mitochondrion matrix</location>
    </subcellularLocation>
</comment>
<comment type="disease" evidence="4 6">
    <disease id="DI-05913">
        <name>Combined oxidative phosphorylation deficiency 48</name>
        <acronym>COXPD48</acronym>
        <description>An autosomal recessive, mitochondrial encephalomyopathy characterized by global developmental delay, microcephaly, failure to thrive, hypotonia, muscle weakness, external ophthalmoplegia, and seizures. Laboratory studies show metabolic acidosis, increased serum lactate, and combined oxidative phosphorylation deficiency in skeletal muscle.</description>
        <dbReference type="MIM" id="619012"/>
    </disease>
    <text>The disease is caused by variants affecting the gene represented in this entry.</text>
</comment>
<comment type="similarity">
    <text evidence="1">Belongs to the class I-like SAM-binding methyltransferase superfamily. RsmB/NOP family.</text>
</comment>
<comment type="sequence caution" evidence="9">
    <conflict type="miscellaneous discrepancy">
        <sequence resource="EMBL-CDS" id="AAN76512"/>
    </conflict>
    <text>Chimera.</text>
</comment>
<comment type="sequence caution" evidence="9">
    <conflict type="frameshift">
        <sequence resource="EMBL-CDS" id="AAQ13600"/>
    </conflict>
</comment>
<comment type="sequence caution" evidence="9">
    <conflict type="erroneous initiation">
        <sequence resource="EMBL-CDS" id="BAB15234"/>
    </conflict>
    <text>Truncated N-terminus.</text>
</comment>
<accession>Q9H649</accession>
<accession>Q6PG41</accession>
<accession>Q8IXG9</accession>
<accession>Q9H6M2</accession>
<proteinExistence type="evidence at protein level"/>
<gene>
    <name evidence="11" type="primary">NSUN3</name>
    <name evidence="7" type="ORF">MSTP077</name>
    <name evidence="8" type="ORF">UG0651E06</name>
</gene>
<dbReference type="EC" id="2.1.1.-" evidence="3 4 5"/>
<dbReference type="EMBL" id="AK025762">
    <property type="protein sequence ID" value="BAB15234.1"/>
    <property type="status" value="ALT_INIT"/>
    <property type="molecule type" value="mRNA"/>
</dbReference>
<dbReference type="EMBL" id="AK026262">
    <property type="protein sequence ID" value="BAB15417.1"/>
    <property type="molecule type" value="mRNA"/>
</dbReference>
<dbReference type="EMBL" id="AF169972">
    <property type="protein sequence ID" value="AAQ13600.1"/>
    <property type="status" value="ALT_FRAME"/>
    <property type="molecule type" value="mRNA"/>
</dbReference>
<dbReference type="EMBL" id="BC020602">
    <property type="protein sequence ID" value="AAH20602.1"/>
    <property type="molecule type" value="mRNA"/>
</dbReference>
<dbReference type="EMBL" id="BC057238">
    <property type="protein sequence ID" value="AAH57238.1"/>
    <property type="molecule type" value="mRNA"/>
</dbReference>
<dbReference type="EMBL" id="AF351612">
    <property type="protein sequence ID" value="AAN76512.1"/>
    <property type="status" value="ALT_SEQ"/>
    <property type="molecule type" value="mRNA"/>
</dbReference>
<dbReference type="CCDS" id="CCDS2927.1"/>
<dbReference type="RefSeq" id="NP_071355.1">
    <property type="nucleotide sequence ID" value="NM_022072.5"/>
</dbReference>
<dbReference type="SMR" id="Q9H649"/>
<dbReference type="BioGRID" id="121978">
    <property type="interactions" value="38"/>
</dbReference>
<dbReference type="FunCoup" id="Q9H649">
    <property type="interactions" value="1027"/>
</dbReference>
<dbReference type="IntAct" id="Q9H649">
    <property type="interactions" value="31"/>
</dbReference>
<dbReference type="STRING" id="9606.ENSP00000318986"/>
<dbReference type="iPTMnet" id="Q9H649"/>
<dbReference type="PhosphoSitePlus" id="Q9H649"/>
<dbReference type="BioMuta" id="NSUN3"/>
<dbReference type="DMDM" id="74733593"/>
<dbReference type="jPOST" id="Q9H649"/>
<dbReference type="MassIVE" id="Q9H649"/>
<dbReference type="PaxDb" id="9606-ENSP00000318986"/>
<dbReference type="PeptideAtlas" id="Q9H649"/>
<dbReference type="ProteomicsDB" id="80957"/>
<dbReference type="Antibodypedia" id="32087">
    <property type="antibodies" value="117 antibodies from 21 providers"/>
</dbReference>
<dbReference type="DNASU" id="63899"/>
<dbReference type="Ensembl" id="ENST00000314622.9">
    <property type="protein sequence ID" value="ENSP00000318986.4"/>
    <property type="gene ID" value="ENSG00000178694.10"/>
</dbReference>
<dbReference type="GeneID" id="63899"/>
<dbReference type="KEGG" id="hsa:63899"/>
<dbReference type="MANE-Select" id="ENST00000314622.9">
    <property type="protein sequence ID" value="ENSP00000318986.4"/>
    <property type="RefSeq nucleotide sequence ID" value="NM_022072.5"/>
    <property type="RefSeq protein sequence ID" value="NP_071355.1"/>
</dbReference>
<dbReference type="UCSC" id="uc003drl.2">
    <property type="organism name" value="human"/>
</dbReference>
<dbReference type="AGR" id="HGNC:26208"/>
<dbReference type="CTD" id="63899"/>
<dbReference type="DisGeNET" id="63899"/>
<dbReference type="GeneCards" id="NSUN3"/>
<dbReference type="HGNC" id="HGNC:26208">
    <property type="gene designation" value="NSUN3"/>
</dbReference>
<dbReference type="HPA" id="ENSG00000178694">
    <property type="expression patterns" value="Low tissue specificity"/>
</dbReference>
<dbReference type="MalaCards" id="NSUN3"/>
<dbReference type="MIM" id="617491">
    <property type="type" value="gene"/>
</dbReference>
<dbReference type="MIM" id="619012">
    <property type="type" value="phenotype"/>
</dbReference>
<dbReference type="neXtProt" id="NX_Q9H649"/>
<dbReference type="OpenTargets" id="ENSG00000178694"/>
<dbReference type="PharmGKB" id="PA134961151"/>
<dbReference type="VEuPathDB" id="HostDB:ENSG00000178694"/>
<dbReference type="eggNOG" id="KOG2198">
    <property type="taxonomic scope" value="Eukaryota"/>
</dbReference>
<dbReference type="GeneTree" id="ENSGT00940000153665"/>
<dbReference type="HOGENOM" id="CLU_041061_1_0_1"/>
<dbReference type="InParanoid" id="Q9H649"/>
<dbReference type="OMA" id="YFHCNEY"/>
<dbReference type="OrthoDB" id="8020218at2759"/>
<dbReference type="PAN-GO" id="Q9H649">
    <property type="GO annotations" value="3 GO annotations based on evolutionary models"/>
</dbReference>
<dbReference type="PhylomeDB" id="Q9H649"/>
<dbReference type="TreeFam" id="TF321304"/>
<dbReference type="BRENDA" id="2.1.1.203">
    <property type="organism ID" value="2681"/>
</dbReference>
<dbReference type="PathwayCommons" id="Q9H649"/>
<dbReference type="SignaLink" id="Q9H649"/>
<dbReference type="BioGRID-ORCS" id="63899">
    <property type="hits" value="12 hits in 1167 CRISPR screens"/>
</dbReference>
<dbReference type="ChiTaRS" id="NSUN3">
    <property type="organism name" value="human"/>
</dbReference>
<dbReference type="GenomeRNAi" id="63899"/>
<dbReference type="Pharos" id="Q9H649">
    <property type="development level" value="Tbio"/>
</dbReference>
<dbReference type="PRO" id="PR:Q9H649"/>
<dbReference type="Proteomes" id="UP000005640">
    <property type="component" value="Chromosome 3"/>
</dbReference>
<dbReference type="RNAct" id="Q9H649">
    <property type="molecule type" value="protein"/>
</dbReference>
<dbReference type="Bgee" id="ENSG00000178694">
    <property type="expression patterns" value="Expressed in sperm and 152 other cell types or tissues"/>
</dbReference>
<dbReference type="ExpressionAtlas" id="Q9H649">
    <property type="expression patterns" value="baseline and differential"/>
</dbReference>
<dbReference type="GO" id="GO:0005762">
    <property type="term" value="C:mitochondrial large ribosomal subunit"/>
    <property type="evidence" value="ECO:0000318"/>
    <property type="project" value="GO_Central"/>
</dbReference>
<dbReference type="GO" id="GO:0005759">
    <property type="term" value="C:mitochondrial matrix"/>
    <property type="evidence" value="ECO:0000314"/>
    <property type="project" value="UniProtKB"/>
</dbReference>
<dbReference type="GO" id="GO:0005739">
    <property type="term" value="C:mitochondrion"/>
    <property type="evidence" value="ECO:0000314"/>
    <property type="project" value="UniProtKB"/>
</dbReference>
<dbReference type="GO" id="GO:0008168">
    <property type="term" value="F:methyltransferase activity"/>
    <property type="evidence" value="ECO:0000318"/>
    <property type="project" value="GO_Central"/>
</dbReference>
<dbReference type="GO" id="GO:0016428">
    <property type="term" value="F:tRNA (cytidine-5-)-methyltransferase activity"/>
    <property type="evidence" value="ECO:0000314"/>
    <property type="project" value="UniProtKB"/>
</dbReference>
<dbReference type="GO" id="GO:0000049">
    <property type="term" value="F:tRNA binding"/>
    <property type="evidence" value="ECO:0007669"/>
    <property type="project" value="UniProtKB-KW"/>
</dbReference>
<dbReference type="GO" id="GO:0070129">
    <property type="term" value="P:regulation of mitochondrial translation"/>
    <property type="evidence" value="ECO:0000315"/>
    <property type="project" value="UniProtKB"/>
</dbReference>
<dbReference type="GO" id="GO:0031167">
    <property type="term" value="P:rRNA methylation"/>
    <property type="evidence" value="ECO:0000318"/>
    <property type="project" value="GO_Central"/>
</dbReference>
<dbReference type="GO" id="GO:0002127">
    <property type="term" value="P:tRNA wobble base cytosine methylation"/>
    <property type="evidence" value="ECO:0000314"/>
    <property type="project" value="UniProtKB"/>
</dbReference>
<dbReference type="CDD" id="cd02440">
    <property type="entry name" value="AdoMet_MTases"/>
    <property type="match status" value="1"/>
</dbReference>
<dbReference type="FunFam" id="3.40.50.150:FF:000055">
    <property type="entry name" value="5-methylcytosine rRNA methyltransferase NSUN4"/>
    <property type="match status" value="1"/>
</dbReference>
<dbReference type="Gene3D" id="6.20.240.40">
    <property type="match status" value="1"/>
</dbReference>
<dbReference type="Gene3D" id="3.40.50.150">
    <property type="entry name" value="Vaccinia Virus protein VP39"/>
    <property type="match status" value="1"/>
</dbReference>
<dbReference type="InterPro" id="IPR049560">
    <property type="entry name" value="MeTrfase_RsmB-F_NOP2_cat"/>
</dbReference>
<dbReference type="InterPro" id="IPR001678">
    <property type="entry name" value="MeTrfase_RsmB-F_NOP2_dom"/>
</dbReference>
<dbReference type="InterPro" id="IPR023267">
    <property type="entry name" value="RCMT"/>
</dbReference>
<dbReference type="InterPro" id="IPR029063">
    <property type="entry name" value="SAM-dependent_MTases_sf"/>
</dbReference>
<dbReference type="PANTHER" id="PTHR22808">
    <property type="entry name" value="NCL1 YEAST -RELATED NOL1/NOP2/FMU SUN DOMAIN-CONTAINING"/>
    <property type="match status" value="1"/>
</dbReference>
<dbReference type="PANTHER" id="PTHR22808:SF8">
    <property type="entry name" value="TRNA (CYTOSINE(34)-C(5))-METHYLTRANSFERASE, MITOCHONDRIAL"/>
    <property type="match status" value="1"/>
</dbReference>
<dbReference type="Pfam" id="PF01189">
    <property type="entry name" value="Methyltr_RsmB-F"/>
    <property type="match status" value="1"/>
</dbReference>
<dbReference type="PRINTS" id="PR02008">
    <property type="entry name" value="RCMTFAMILY"/>
</dbReference>
<dbReference type="SUPFAM" id="SSF53335">
    <property type="entry name" value="S-adenosyl-L-methionine-dependent methyltransferases"/>
    <property type="match status" value="1"/>
</dbReference>
<dbReference type="PROSITE" id="PS51686">
    <property type="entry name" value="SAM_MT_RSMB_NOP"/>
    <property type="match status" value="1"/>
</dbReference>